<gene>
    <name evidence="1" type="primary">trmB</name>
    <name type="ordered locus">Cagg_3746</name>
</gene>
<reference key="1">
    <citation type="submission" date="2008-12" db="EMBL/GenBank/DDBJ databases">
        <title>Complete sequence of Chloroflexus aggregans DSM 9485.</title>
        <authorList>
            <consortium name="US DOE Joint Genome Institute"/>
            <person name="Lucas S."/>
            <person name="Copeland A."/>
            <person name="Lapidus A."/>
            <person name="Glavina del Rio T."/>
            <person name="Dalin E."/>
            <person name="Tice H."/>
            <person name="Pitluck S."/>
            <person name="Foster B."/>
            <person name="Larimer F."/>
            <person name="Land M."/>
            <person name="Hauser L."/>
            <person name="Kyrpides N."/>
            <person name="Mikhailova N."/>
            <person name="Bryant D.A."/>
            <person name="Richardson P."/>
        </authorList>
    </citation>
    <scope>NUCLEOTIDE SEQUENCE [LARGE SCALE GENOMIC DNA]</scope>
    <source>
        <strain>MD-66 / DSM 9485</strain>
    </source>
</reference>
<feature type="chain" id="PRO_0000387943" description="tRNA (guanine-N(7)-)-methyltransferase">
    <location>
        <begin position="1"/>
        <end position="224"/>
    </location>
</feature>
<feature type="binding site" evidence="1">
    <location>
        <position position="57"/>
    </location>
    <ligand>
        <name>S-adenosyl-L-methionine</name>
        <dbReference type="ChEBI" id="CHEBI:59789"/>
    </ligand>
</feature>
<feature type="binding site" evidence="1">
    <location>
        <position position="82"/>
    </location>
    <ligand>
        <name>S-adenosyl-L-methionine</name>
        <dbReference type="ChEBI" id="CHEBI:59789"/>
    </ligand>
</feature>
<feature type="binding site" evidence="1">
    <location>
        <position position="109"/>
    </location>
    <ligand>
        <name>S-adenosyl-L-methionine</name>
        <dbReference type="ChEBI" id="CHEBI:59789"/>
    </ligand>
</feature>
<feature type="binding site" evidence="1">
    <location>
        <position position="167"/>
    </location>
    <ligand>
        <name>substrate</name>
    </ligand>
</feature>
<dbReference type="EC" id="2.1.1.33" evidence="1"/>
<dbReference type="EMBL" id="CP001337">
    <property type="protein sequence ID" value="ACL26582.1"/>
    <property type="molecule type" value="Genomic_DNA"/>
</dbReference>
<dbReference type="RefSeq" id="WP_015942427.1">
    <property type="nucleotide sequence ID" value="NC_011831.1"/>
</dbReference>
<dbReference type="SMR" id="B8GAY2"/>
<dbReference type="STRING" id="326427.Cagg_3746"/>
<dbReference type="KEGG" id="cag:Cagg_3746"/>
<dbReference type="eggNOG" id="COG0220">
    <property type="taxonomic scope" value="Bacteria"/>
</dbReference>
<dbReference type="HOGENOM" id="CLU_050910_2_0_0"/>
<dbReference type="OrthoDB" id="9802090at2"/>
<dbReference type="UniPathway" id="UPA00989"/>
<dbReference type="Proteomes" id="UP000002508">
    <property type="component" value="Chromosome"/>
</dbReference>
<dbReference type="GO" id="GO:0043527">
    <property type="term" value="C:tRNA methyltransferase complex"/>
    <property type="evidence" value="ECO:0007669"/>
    <property type="project" value="TreeGrafter"/>
</dbReference>
<dbReference type="GO" id="GO:0008176">
    <property type="term" value="F:tRNA (guanine(46)-N7)-methyltransferase activity"/>
    <property type="evidence" value="ECO:0007669"/>
    <property type="project" value="UniProtKB-UniRule"/>
</dbReference>
<dbReference type="CDD" id="cd02440">
    <property type="entry name" value="AdoMet_MTases"/>
    <property type="match status" value="1"/>
</dbReference>
<dbReference type="Gene3D" id="3.40.50.150">
    <property type="entry name" value="Vaccinia Virus protein VP39"/>
    <property type="match status" value="1"/>
</dbReference>
<dbReference type="HAMAP" id="MF_01057">
    <property type="entry name" value="tRNA_methyltr_TrmB"/>
    <property type="match status" value="1"/>
</dbReference>
<dbReference type="InterPro" id="IPR029063">
    <property type="entry name" value="SAM-dependent_MTases_sf"/>
</dbReference>
<dbReference type="InterPro" id="IPR003358">
    <property type="entry name" value="tRNA_(Gua-N-7)_MeTrfase_Trmb"/>
</dbReference>
<dbReference type="InterPro" id="IPR055361">
    <property type="entry name" value="tRNA_methyltr_TrmB_bact"/>
</dbReference>
<dbReference type="PANTHER" id="PTHR23417">
    <property type="entry name" value="3-DEOXY-D-MANNO-OCTULOSONIC-ACID TRANSFERASE/TRNA GUANINE-N 7 - -METHYLTRANSFERASE"/>
    <property type="match status" value="1"/>
</dbReference>
<dbReference type="PANTHER" id="PTHR23417:SF14">
    <property type="entry name" value="PENTACOTRIPEPTIDE-REPEAT REGION OF PRORP DOMAIN-CONTAINING PROTEIN"/>
    <property type="match status" value="1"/>
</dbReference>
<dbReference type="Pfam" id="PF02390">
    <property type="entry name" value="Methyltransf_4"/>
    <property type="match status" value="1"/>
</dbReference>
<dbReference type="SUPFAM" id="SSF53335">
    <property type="entry name" value="S-adenosyl-L-methionine-dependent methyltransferases"/>
    <property type="match status" value="1"/>
</dbReference>
<dbReference type="PROSITE" id="PS51625">
    <property type="entry name" value="SAM_MT_TRMB"/>
    <property type="match status" value="1"/>
</dbReference>
<keyword id="KW-0489">Methyltransferase</keyword>
<keyword id="KW-0949">S-adenosyl-L-methionine</keyword>
<keyword id="KW-0808">Transferase</keyword>
<keyword id="KW-0819">tRNA processing</keyword>
<name>TRMB_CHLAD</name>
<protein>
    <recommendedName>
        <fullName evidence="1">tRNA (guanine-N(7)-)-methyltransferase</fullName>
        <ecNumber evidence="1">2.1.1.33</ecNumber>
    </recommendedName>
    <alternativeName>
        <fullName evidence="1">tRNA (guanine(46)-N(7))-methyltransferase</fullName>
    </alternativeName>
    <alternativeName>
        <fullName evidence="1">tRNA(m7G46)-methyltransferase</fullName>
    </alternativeName>
</protein>
<comment type="function">
    <text evidence="1">Catalyzes the formation of N(7)-methylguanine at position 46 (m7G46) in tRNA.</text>
</comment>
<comment type="catalytic activity">
    <reaction evidence="1">
        <text>guanosine(46) in tRNA + S-adenosyl-L-methionine = N(7)-methylguanosine(46) in tRNA + S-adenosyl-L-homocysteine</text>
        <dbReference type="Rhea" id="RHEA:42708"/>
        <dbReference type="Rhea" id="RHEA-COMP:10188"/>
        <dbReference type="Rhea" id="RHEA-COMP:10189"/>
        <dbReference type="ChEBI" id="CHEBI:57856"/>
        <dbReference type="ChEBI" id="CHEBI:59789"/>
        <dbReference type="ChEBI" id="CHEBI:74269"/>
        <dbReference type="ChEBI" id="CHEBI:74480"/>
        <dbReference type="EC" id="2.1.1.33"/>
    </reaction>
</comment>
<comment type="pathway">
    <text evidence="1">tRNA modification; N(7)-methylguanine-tRNA biosynthesis.</text>
</comment>
<comment type="similarity">
    <text evidence="1">Belongs to the class I-like SAM-binding methyltransferase superfamily. TrmB family.</text>
</comment>
<organism>
    <name type="scientific">Chloroflexus aggregans (strain MD-66 / DSM 9485)</name>
    <dbReference type="NCBI Taxonomy" id="326427"/>
    <lineage>
        <taxon>Bacteria</taxon>
        <taxon>Bacillati</taxon>
        <taxon>Chloroflexota</taxon>
        <taxon>Chloroflexia</taxon>
        <taxon>Chloroflexales</taxon>
        <taxon>Chloroflexineae</taxon>
        <taxon>Chloroflexaceae</taxon>
        <taxon>Chloroflexus</taxon>
    </lineage>
</organism>
<accession>B8GAY2</accession>
<proteinExistence type="inferred from homology"/>
<sequence>MGRGRYPARLKVTVPPPEIAARYYRSWPAHELYHHPDRFPLLNAESLFGRNAPLTLELGCATGEYICTLATAQPDACFVGVDIVAKPLYRAVERAVELGLENIIFLQADARLLYQRIPDCVLTTIILHFPPPLLRNRQRNQLLVSAQMLGCAERSLVPGGYLSFLTDHPDLFSLMQELLPAFPRLRGLPASPSELAVFESHYHRRWAARGREIRGLRIERIAEE</sequence>
<evidence type="ECO:0000255" key="1">
    <source>
        <dbReference type="HAMAP-Rule" id="MF_01057"/>
    </source>
</evidence>